<keyword id="KW-0966">Cell projection</keyword>
<keyword id="KW-0969">Cilium</keyword>
<keyword id="KW-0970">Cilium biogenesis/degradation</keyword>
<keyword id="KW-0963">Cytoplasm</keyword>
<keyword id="KW-0206">Cytoskeleton</keyword>
<keyword id="KW-0217">Developmental protein</keyword>
<keyword id="KW-0243">Dynein</keyword>
<keyword id="KW-0493">Microtubule</keyword>
<keyword id="KW-0505">Motor protein</keyword>
<keyword id="KW-1185">Reference proteome</keyword>
<name>DC2L1_MOUSE</name>
<proteinExistence type="evidence at protein level"/>
<sequence>MPSETLWEIAKAEVEKRRSHGSEGDGAEIGEKSVFFIGSKNGGKTTIILRCLDRDESAKPTLALEYTYGRKTKGHNTPKDIAHFWELGGGTSLLDLISIPITVDTLRTFSIVLVLDLSKPNDLWSTMENLLQATKSHVDKVIMKLGKTSSKASAEMRQRMWSVVQKDHPDRELIDPFPIPLVIIGSKYDIFQDFDPEKRKVICKTLRFVAHYYGASLMFTSKSEALLLKIRGVINQLAFGIDKSKSICVDQNKPLFITAGLDSLCQIGSPPVPDSDIGKLQAHSPMELWKKVYDKLFPPKSTGTLKAVQDPARDPQYAESEVDEMRVQKDQELEHYKRSSSKTWKQIELDS</sequence>
<protein>
    <recommendedName>
        <fullName>Cytoplasmic dynein 2 light intermediate chain 1</fullName>
        <shortName>mD2LIC</shortName>
    </recommendedName>
</protein>
<feature type="chain" id="PRO_0000318751" description="Cytoplasmic dynein 2 light intermediate chain 1">
    <location>
        <begin position="1"/>
        <end position="351"/>
    </location>
</feature>
<feature type="region of interest" description="Disordered" evidence="2">
    <location>
        <begin position="303"/>
        <end position="335"/>
    </location>
</feature>
<feature type="compositionally biased region" description="Basic and acidic residues" evidence="2">
    <location>
        <begin position="323"/>
        <end position="335"/>
    </location>
</feature>
<feature type="sequence conflict" description="In Ref. 1; BAE35717." evidence="7" ref="1">
    <original>E</original>
    <variation>Q</variation>
    <location>
        <position position="15"/>
    </location>
</feature>
<feature type="sequence conflict" description="In Ref. 1; BAE35717." evidence="7" ref="1">
    <original>V</original>
    <variation>L</variation>
    <location>
        <position position="34"/>
    </location>
</feature>
<feature type="sequence conflict" description="In Ref. 1; BAE35717." evidence="7" ref="1">
    <original>L</original>
    <variation>H</variation>
    <location>
        <position position="123"/>
    </location>
</feature>
<dbReference type="EMBL" id="AK160259">
    <property type="protein sequence ID" value="BAE35717.1"/>
    <property type="status" value="ALT_FRAME"/>
    <property type="molecule type" value="mRNA"/>
</dbReference>
<dbReference type="EMBL" id="BC030450">
    <property type="protein sequence ID" value="AAH30450.1"/>
    <property type="molecule type" value="mRNA"/>
</dbReference>
<dbReference type="EMBL" id="BC039070">
    <property type="protein sequence ID" value="AAH39070.1"/>
    <property type="molecule type" value="mRNA"/>
</dbReference>
<dbReference type="CCDS" id="CCDS29000.1"/>
<dbReference type="RefSeq" id="NP_758460.1">
    <property type="nucleotide sequence ID" value="NM_172256.2"/>
</dbReference>
<dbReference type="SMR" id="Q8K0T2"/>
<dbReference type="FunCoup" id="Q8K0T2">
    <property type="interactions" value="432"/>
</dbReference>
<dbReference type="STRING" id="10090.ENSMUSP00000025101"/>
<dbReference type="iPTMnet" id="Q8K0T2"/>
<dbReference type="PhosphoSitePlus" id="Q8K0T2"/>
<dbReference type="SwissPalm" id="Q8K0T2"/>
<dbReference type="PaxDb" id="10090-ENSMUSP00000025101"/>
<dbReference type="ProteomicsDB" id="279159"/>
<dbReference type="Pumba" id="Q8K0T2"/>
<dbReference type="Antibodypedia" id="47397">
    <property type="antibodies" value="93 antibodies from 20 providers"/>
</dbReference>
<dbReference type="DNASU" id="213575"/>
<dbReference type="Ensembl" id="ENSMUST00000025101.10">
    <property type="protein sequence ID" value="ENSMUSP00000025101.9"/>
    <property type="gene ID" value="ENSMUSG00000024253.10"/>
</dbReference>
<dbReference type="GeneID" id="213575"/>
<dbReference type="KEGG" id="mmu:213575"/>
<dbReference type="UCSC" id="uc008dsy.1">
    <property type="organism name" value="mouse"/>
</dbReference>
<dbReference type="AGR" id="MGI:1913996"/>
<dbReference type="CTD" id="51626"/>
<dbReference type="MGI" id="MGI:1913996">
    <property type="gene designation" value="Dync2li1"/>
</dbReference>
<dbReference type="VEuPathDB" id="HostDB:ENSMUSG00000024253"/>
<dbReference type="eggNOG" id="KOG3929">
    <property type="taxonomic scope" value="Eukaryota"/>
</dbReference>
<dbReference type="GeneTree" id="ENSGT00390000010498"/>
<dbReference type="HOGENOM" id="CLU_049395_0_0_1"/>
<dbReference type="InParanoid" id="Q8K0T2"/>
<dbReference type="OMA" id="FWEIAQG"/>
<dbReference type="OrthoDB" id="10263060at2759"/>
<dbReference type="PhylomeDB" id="Q8K0T2"/>
<dbReference type="TreeFam" id="TF314138"/>
<dbReference type="Reactome" id="R-MMU-5620924">
    <property type="pathway name" value="Intraflagellar transport"/>
</dbReference>
<dbReference type="BioGRID-ORCS" id="213575">
    <property type="hits" value="2 hits in 60 CRISPR screens"/>
</dbReference>
<dbReference type="ChiTaRS" id="Dync2li1">
    <property type="organism name" value="mouse"/>
</dbReference>
<dbReference type="PRO" id="PR:Q8K0T2"/>
<dbReference type="Proteomes" id="UP000000589">
    <property type="component" value="Chromosome 17"/>
</dbReference>
<dbReference type="RNAct" id="Q8K0T2">
    <property type="molecule type" value="protein"/>
</dbReference>
<dbReference type="Bgee" id="ENSMUSG00000024253">
    <property type="expression patterns" value="Expressed in otolith organ and 225 other cell types or tissues"/>
</dbReference>
<dbReference type="GO" id="GO:0045177">
    <property type="term" value="C:apical part of cell"/>
    <property type="evidence" value="ECO:0000314"/>
    <property type="project" value="BHF-UCL"/>
</dbReference>
<dbReference type="GO" id="GO:0005930">
    <property type="term" value="C:axoneme"/>
    <property type="evidence" value="ECO:0000314"/>
    <property type="project" value="BHF-UCL"/>
</dbReference>
<dbReference type="GO" id="GO:0005813">
    <property type="term" value="C:centrosome"/>
    <property type="evidence" value="ECO:0000250"/>
    <property type="project" value="UniProtKB"/>
</dbReference>
<dbReference type="GO" id="GO:0036064">
    <property type="term" value="C:ciliary basal body"/>
    <property type="evidence" value="ECO:0000250"/>
    <property type="project" value="UniProtKB"/>
</dbReference>
<dbReference type="GO" id="GO:0035869">
    <property type="term" value="C:ciliary transition zone"/>
    <property type="evidence" value="ECO:0000250"/>
    <property type="project" value="UniProtKB"/>
</dbReference>
<dbReference type="GO" id="GO:0005737">
    <property type="term" value="C:cytoplasm"/>
    <property type="evidence" value="ECO:0000250"/>
    <property type="project" value="UniProtKB"/>
</dbReference>
<dbReference type="GO" id="GO:0005868">
    <property type="term" value="C:cytoplasmic dynein complex"/>
    <property type="evidence" value="ECO:0000250"/>
    <property type="project" value="UniProtKB"/>
</dbReference>
<dbReference type="GO" id="GO:0005829">
    <property type="term" value="C:cytosol"/>
    <property type="evidence" value="ECO:0007669"/>
    <property type="project" value="Ensembl"/>
</dbReference>
<dbReference type="GO" id="GO:0005874">
    <property type="term" value="C:microtubule"/>
    <property type="evidence" value="ECO:0007669"/>
    <property type="project" value="UniProtKB-KW"/>
</dbReference>
<dbReference type="GO" id="GO:0031514">
    <property type="term" value="C:motile cilium"/>
    <property type="evidence" value="ECO:0000314"/>
    <property type="project" value="BHF-UCL"/>
</dbReference>
<dbReference type="GO" id="GO:0016607">
    <property type="term" value="C:nuclear speck"/>
    <property type="evidence" value="ECO:0007669"/>
    <property type="project" value="Ensembl"/>
</dbReference>
<dbReference type="GO" id="GO:0045504">
    <property type="term" value="F:dynein heavy chain binding"/>
    <property type="evidence" value="ECO:0000250"/>
    <property type="project" value="UniProtKB"/>
</dbReference>
<dbReference type="GO" id="GO:0060271">
    <property type="term" value="P:cilium assembly"/>
    <property type="evidence" value="ECO:0000315"/>
    <property type="project" value="MGI"/>
</dbReference>
<dbReference type="GO" id="GO:0007368">
    <property type="term" value="P:determination of left/right symmetry"/>
    <property type="evidence" value="ECO:0000315"/>
    <property type="project" value="MGI"/>
</dbReference>
<dbReference type="GO" id="GO:0035721">
    <property type="term" value="P:intraciliary retrograde transport"/>
    <property type="evidence" value="ECO:0007669"/>
    <property type="project" value="InterPro"/>
</dbReference>
<dbReference type="GO" id="GO:0035735">
    <property type="term" value="P:intraciliary transport involved in cilium assembly"/>
    <property type="evidence" value="ECO:0000250"/>
    <property type="project" value="UniProtKB"/>
</dbReference>
<dbReference type="GO" id="GO:1902017">
    <property type="term" value="P:regulation of cilium assembly"/>
    <property type="evidence" value="ECO:0000250"/>
    <property type="project" value="UniProtKB"/>
</dbReference>
<dbReference type="InterPro" id="IPR040045">
    <property type="entry name" value="DYNC2LI1"/>
</dbReference>
<dbReference type="InterPro" id="IPR022780">
    <property type="entry name" value="Dynein_light_int_chain"/>
</dbReference>
<dbReference type="InterPro" id="IPR027417">
    <property type="entry name" value="P-loop_NTPase"/>
</dbReference>
<dbReference type="PANTHER" id="PTHR13236:SF0">
    <property type="entry name" value="CYTOPLASMIC DYNEIN 2 LIGHT INTERMEDIATE CHAIN 1"/>
    <property type="match status" value="1"/>
</dbReference>
<dbReference type="PANTHER" id="PTHR13236">
    <property type="entry name" value="DYNEIN 2 LIGHT INTERMEDIATE CHAIN, ISOFORM 2"/>
    <property type="match status" value="1"/>
</dbReference>
<dbReference type="Pfam" id="PF05783">
    <property type="entry name" value="DLIC"/>
    <property type="match status" value="1"/>
</dbReference>
<dbReference type="SUPFAM" id="SSF52540">
    <property type="entry name" value="P-loop containing nucleoside triphosphate hydrolases"/>
    <property type="match status" value="1"/>
</dbReference>
<gene>
    <name type="primary">Dync2li1</name>
    <name type="synonym">D2lic</name>
</gene>
<accession>Q8K0T2</accession>
<accession>Q3TVA2</accession>
<organism>
    <name type="scientific">Mus musculus</name>
    <name type="common">Mouse</name>
    <dbReference type="NCBI Taxonomy" id="10090"/>
    <lineage>
        <taxon>Eukaryota</taxon>
        <taxon>Metazoa</taxon>
        <taxon>Chordata</taxon>
        <taxon>Craniata</taxon>
        <taxon>Vertebrata</taxon>
        <taxon>Euteleostomi</taxon>
        <taxon>Mammalia</taxon>
        <taxon>Eutheria</taxon>
        <taxon>Euarchontoglires</taxon>
        <taxon>Glires</taxon>
        <taxon>Rodentia</taxon>
        <taxon>Myomorpha</taxon>
        <taxon>Muroidea</taxon>
        <taxon>Muridae</taxon>
        <taxon>Murinae</taxon>
        <taxon>Mus</taxon>
        <taxon>Mus</taxon>
    </lineage>
</organism>
<evidence type="ECO:0000250" key="1">
    <source>
        <dbReference type="UniProtKB" id="Q8TCX1"/>
    </source>
</evidence>
<evidence type="ECO:0000256" key="2">
    <source>
        <dbReference type="SAM" id="MobiDB-lite"/>
    </source>
</evidence>
<evidence type="ECO:0000269" key="3">
    <source>
    </source>
</evidence>
<evidence type="ECO:0000269" key="4">
    <source>
    </source>
</evidence>
<evidence type="ECO:0000269" key="5">
    <source>
    </source>
</evidence>
<evidence type="ECO:0000269" key="6">
    <source>
    </source>
</evidence>
<evidence type="ECO:0000305" key="7"/>
<reference key="1">
    <citation type="journal article" date="2005" name="Science">
        <title>The transcriptional landscape of the mammalian genome.</title>
        <authorList>
            <person name="Carninci P."/>
            <person name="Kasukawa T."/>
            <person name="Katayama S."/>
            <person name="Gough J."/>
            <person name="Frith M.C."/>
            <person name="Maeda N."/>
            <person name="Oyama R."/>
            <person name="Ravasi T."/>
            <person name="Lenhard B."/>
            <person name="Wells C."/>
            <person name="Kodzius R."/>
            <person name="Shimokawa K."/>
            <person name="Bajic V.B."/>
            <person name="Brenner S.E."/>
            <person name="Batalov S."/>
            <person name="Forrest A.R."/>
            <person name="Zavolan M."/>
            <person name="Davis M.J."/>
            <person name="Wilming L.G."/>
            <person name="Aidinis V."/>
            <person name="Allen J.E."/>
            <person name="Ambesi-Impiombato A."/>
            <person name="Apweiler R."/>
            <person name="Aturaliya R.N."/>
            <person name="Bailey T.L."/>
            <person name="Bansal M."/>
            <person name="Baxter L."/>
            <person name="Beisel K.W."/>
            <person name="Bersano T."/>
            <person name="Bono H."/>
            <person name="Chalk A.M."/>
            <person name="Chiu K.P."/>
            <person name="Choudhary V."/>
            <person name="Christoffels A."/>
            <person name="Clutterbuck D.R."/>
            <person name="Crowe M.L."/>
            <person name="Dalla E."/>
            <person name="Dalrymple B.P."/>
            <person name="de Bono B."/>
            <person name="Della Gatta G."/>
            <person name="di Bernardo D."/>
            <person name="Down T."/>
            <person name="Engstrom P."/>
            <person name="Fagiolini M."/>
            <person name="Faulkner G."/>
            <person name="Fletcher C.F."/>
            <person name="Fukushima T."/>
            <person name="Furuno M."/>
            <person name="Futaki S."/>
            <person name="Gariboldi M."/>
            <person name="Georgii-Hemming P."/>
            <person name="Gingeras T.R."/>
            <person name="Gojobori T."/>
            <person name="Green R.E."/>
            <person name="Gustincich S."/>
            <person name="Harbers M."/>
            <person name="Hayashi Y."/>
            <person name="Hensch T.K."/>
            <person name="Hirokawa N."/>
            <person name="Hill D."/>
            <person name="Huminiecki L."/>
            <person name="Iacono M."/>
            <person name="Ikeo K."/>
            <person name="Iwama A."/>
            <person name="Ishikawa T."/>
            <person name="Jakt M."/>
            <person name="Kanapin A."/>
            <person name="Katoh M."/>
            <person name="Kawasawa Y."/>
            <person name="Kelso J."/>
            <person name="Kitamura H."/>
            <person name="Kitano H."/>
            <person name="Kollias G."/>
            <person name="Krishnan S.P."/>
            <person name="Kruger A."/>
            <person name="Kummerfeld S.K."/>
            <person name="Kurochkin I.V."/>
            <person name="Lareau L.F."/>
            <person name="Lazarevic D."/>
            <person name="Lipovich L."/>
            <person name="Liu J."/>
            <person name="Liuni S."/>
            <person name="McWilliam S."/>
            <person name="Madan Babu M."/>
            <person name="Madera M."/>
            <person name="Marchionni L."/>
            <person name="Matsuda H."/>
            <person name="Matsuzawa S."/>
            <person name="Miki H."/>
            <person name="Mignone F."/>
            <person name="Miyake S."/>
            <person name="Morris K."/>
            <person name="Mottagui-Tabar S."/>
            <person name="Mulder N."/>
            <person name="Nakano N."/>
            <person name="Nakauchi H."/>
            <person name="Ng P."/>
            <person name="Nilsson R."/>
            <person name="Nishiguchi S."/>
            <person name="Nishikawa S."/>
            <person name="Nori F."/>
            <person name="Ohara O."/>
            <person name="Okazaki Y."/>
            <person name="Orlando V."/>
            <person name="Pang K.C."/>
            <person name="Pavan W.J."/>
            <person name="Pavesi G."/>
            <person name="Pesole G."/>
            <person name="Petrovsky N."/>
            <person name="Piazza S."/>
            <person name="Reed J."/>
            <person name="Reid J.F."/>
            <person name="Ring B.Z."/>
            <person name="Ringwald M."/>
            <person name="Rost B."/>
            <person name="Ruan Y."/>
            <person name="Salzberg S.L."/>
            <person name="Sandelin A."/>
            <person name="Schneider C."/>
            <person name="Schoenbach C."/>
            <person name="Sekiguchi K."/>
            <person name="Semple C.A."/>
            <person name="Seno S."/>
            <person name="Sessa L."/>
            <person name="Sheng Y."/>
            <person name="Shibata Y."/>
            <person name="Shimada H."/>
            <person name="Shimada K."/>
            <person name="Silva D."/>
            <person name="Sinclair B."/>
            <person name="Sperling S."/>
            <person name="Stupka E."/>
            <person name="Sugiura K."/>
            <person name="Sultana R."/>
            <person name="Takenaka Y."/>
            <person name="Taki K."/>
            <person name="Tammoja K."/>
            <person name="Tan S.L."/>
            <person name="Tang S."/>
            <person name="Taylor M.S."/>
            <person name="Tegner J."/>
            <person name="Teichmann S.A."/>
            <person name="Ueda H.R."/>
            <person name="van Nimwegen E."/>
            <person name="Verardo R."/>
            <person name="Wei C.L."/>
            <person name="Yagi K."/>
            <person name="Yamanishi H."/>
            <person name="Zabarovsky E."/>
            <person name="Zhu S."/>
            <person name="Zimmer A."/>
            <person name="Hide W."/>
            <person name="Bult C."/>
            <person name="Grimmond S.M."/>
            <person name="Teasdale R.D."/>
            <person name="Liu E.T."/>
            <person name="Brusic V."/>
            <person name="Quackenbush J."/>
            <person name="Wahlestedt C."/>
            <person name="Mattick J.S."/>
            <person name="Hume D.A."/>
            <person name="Kai C."/>
            <person name="Sasaki D."/>
            <person name="Tomaru Y."/>
            <person name="Fukuda S."/>
            <person name="Kanamori-Katayama M."/>
            <person name="Suzuki M."/>
            <person name="Aoki J."/>
            <person name="Arakawa T."/>
            <person name="Iida J."/>
            <person name="Imamura K."/>
            <person name="Itoh M."/>
            <person name="Kato T."/>
            <person name="Kawaji H."/>
            <person name="Kawagashira N."/>
            <person name="Kawashima T."/>
            <person name="Kojima M."/>
            <person name="Kondo S."/>
            <person name="Konno H."/>
            <person name="Nakano K."/>
            <person name="Ninomiya N."/>
            <person name="Nishio T."/>
            <person name="Okada M."/>
            <person name="Plessy C."/>
            <person name="Shibata K."/>
            <person name="Shiraki T."/>
            <person name="Suzuki S."/>
            <person name="Tagami M."/>
            <person name="Waki K."/>
            <person name="Watahiki A."/>
            <person name="Okamura-Oho Y."/>
            <person name="Suzuki H."/>
            <person name="Kawai J."/>
            <person name="Hayashizaki Y."/>
        </authorList>
    </citation>
    <scope>NUCLEOTIDE SEQUENCE [LARGE SCALE MRNA]</scope>
    <source>
        <strain>C57BL/6J</strain>
        <tissue>Testis</tissue>
    </source>
</reference>
<reference key="2">
    <citation type="journal article" date="2004" name="Genome Res.">
        <title>The status, quality, and expansion of the NIH full-length cDNA project: the Mammalian Gene Collection (MGC).</title>
        <authorList>
            <consortium name="The MGC Project Team"/>
        </authorList>
    </citation>
    <scope>NUCLEOTIDE SEQUENCE [LARGE SCALE MRNA]</scope>
    <source>
        <tissue>Eye</tissue>
        <tissue>Mammary tumor</tissue>
    </source>
</reference>
<reference key="3">
    <citation type="journal article" date="2002" name="J. Cell Sci.">
        <title>Molecular structure of cytoplasmic dynein 2 and its distribution in neuronal and ciliated cells.</title>
        <authorList>
            <person name="Mikami A."/>
            <person name="Tynan S.H."/>
            <person name="Hama T."/>
            <person name="Luby-Phelps K."/>
            <person name="Saito T."/>
            <person name="Crandall J.E."/>
            <person name="Besharse J.C."/>
            <person name="Vallee R.B."/>
        </authorList>
    </citation>
    <scope>TISSUE SPECIFICITY</scope>
</reference>
<reference key="4">
    <citation type="journal article" date="2002" name="Mol. Biol. Cell">
        <title>Identification of a novel light intermediate chain (D2LIC) for mammalian cytoplasmic dynein 2.</title>
        <authorList>
            <person name="Grissom P.M."/>
            <person name="Vaisberg E.A."/>
            <person name="McIntosh J.R."/>
        </authorList>
    </citation>
    <scope>TISSUE SPECIFICITY</scope>
</reference>
<reference key="5">
    <citation type="journal article" date="2003" name="Mol. Biol. Cell">
        <title>A novel dynein light intermediate chain colocalizes with the retrograde motor for intraflagellar transport at sites of axoneme assembly in chlamydomonas and mammalian cells.</title>
        <authorList>
            <person name="Perrone C.A."/>
            <person name="Tritschler D."/>
            <person name="Taulman P."/>
            <person name="Bower R."/>
            <person name="Yoder B.K."/>
            <person name="Porter M.E."/>
        </authorList>
    </citation>
    <scope>SUBCELLULAR LOCATION</scope>
    <scope>TISSUE SPECIFICITY</scope>
</reference>
<reference key="6">
    <citation type="journal article" date="2004" name="Development">
        <title>Targeted deletion of the novel cytoplasmic dynein mD2LIC disrupts the embryonic organiser, formation of the body axes and specification of ventral cell fates.</title>
        <authorList>
            <person name="Rana A.A."/>
            <person name="Barbera J.P.M."/>
            <person name="Rodriguez T.A."/>
            <person name="Lynch D."/>
            <person name="Hirst E."/>
            <person name="Smith J.C."/>
            <person name="Beddington R.S.P."/>
        </authorList>
    </citation>
    <scope>FUNCTION</scope>
    <scope>TISSUE SPECIFICITY</scope>
    <scope>DEVELOPMENTAL STAGE</scope>
    <scope>DISRUPTION PHENOTYPE</scope>
</reference>
<reference key="7">
    <citation type="journal article" date="2010" name="Cell">
        <title>A tissue-specific atlas of mouse protein phosphorylation and expression.</title>
        <authorList>
            <person name="Huttlin E.L."/>
            <person name="Jedrychowski M.P."/>
            <person name="Elias J.E."/>
            <person name="Goswami T."/>
            <person name="Rad R."/>
            <person name="Beausoleil S.A."/>
            <person name="Villen J."/>
            <person name="Haas W."/>
            <person name="Sowa M.E."/>
            <person name="Gygi S.P."/>
        </authorList>
    </citation>
    <scope>IDENTIFICATION BY MASS SPECTROMETRY [LARGE SCALE ANALYSIS]</scope>
    <source>
        <tissue>Testis</tissue>
    </source>
</reference>
<comment type="function">
    <text evidence="1 6">Acts as one of several non-catalytic accessory components of the cytoplasmic dynein 2 complex (dynein-2 complex), a motor protein complex that drives the movement of cargos along microtubules within cilia and flagella in concert with the intraflagellar transport (IFT) system, facilitating the assembly of these organelles (By similarity) (PubMed:15371312). Involved in the regulation of ciliary length (By similarity).</text>
</comment>
<comment type="subunit">
    <text evidence="1">Light intermediate chain of the cytoplasmic dynein complex 2, a multisubunit complex composed at least of eleven different proteins. The cytoplasmic dynein 2 complex consists of two catalytic heavy chains (HCs) and a number of non-catalytic subunits presented by intermediate chains (ICs), light intermediate chains (LICs) and light chains (LCs). Among them, a heavy chain (DYNC2H1), two intermediate chains (DYNC2I2 and DYNC2I1), a light intermediate chain (DYNC2LI1), and a light chain (DYNLT2B) are unique to the dynein-2 complex, but a subset of light chains are also shared by dynein-1 and dynein-2 complexes. Dynein-2 complex is built around two copies of cytoplasmic dynein 2 heavy chain 1 (DYNC2H1). The C-terminal region forms the motor domain, which converts the energy from ATP hydrolysis into movement. Its N-terminal region forms the tail, an extended structure that binds the other subunits and holds the two heavy chains in a homodimer. Interacts with DYNC2H1 (via N-terminus); this interaction stabilizes the dynein-2 complex structure.</text>
</comment>
<comment type="subcellular location">
    <subcellularLocation>
        <location evidence="5">Cytoplasm</location>
    </subcellularLocation>
    <subcellularLocation>
        <location evidence="1">Cell projection</location>
        <location evidence="1">Cilium</location>
    </subcellularLocation>
    <subcellularLocation>
        <location evidence="1">Cytoplasm</location>
        <location evidence="1">Cytoskeleton</location>
        <location evidence="1">Cilium basal body</location>
    </subcellularLocation>
    <subcellularLocation>
        <location evidence="5">Cytoplasm</location>
        <location evidence="5">Cytoskeleton</location>
        <location evidence="5">Cilium axoneme</location>
    </subcellularLocation>
    <subcellularLocation>
        <location evidence="1">Cytoplasm</location>
        <location evidence="1">Cytoskeleton</location>
        <location evidence="1">Microtubule organizing center</location>
        <location evidence="1">Centrosome</location>
    </subcellularLocation>
    <text evidence="5">Localizes to the apical cytoplasm.</text>
</comment>
<comment type="tissue specificity">
    <text evidence="3 4 5 6">Specifically expressed by ciliated cells in brain, lung, spleen, testis and kidney (at protein level). Enriched in the ependymal layer lining the lateral ventricles (at protein level).</text>
</comment>
<comment type="developmental stage">
    <text evidence="6">Specifically expressed by monociliated cells of the ventral node from the late streak to early somite stage.</text>
</comment>
<comment type="disruption phenotype">
    <text evidence="6">Death before 11.5 dpc with defects in notochord and floor plate formation and a reduction of definitive endoderm. Mice also display anterior truncations of the forebrain, defects in the ventral body wall, in closure of the neural tube, and either an arrest of embryonic turning and heart looping or a randomization in their direction.</text>
</comment>
<comment type="similarity">
    <text evidence="7">Belongs to the dynein light intermediate chain family.</text>
</comment>
<comment type="sequence caution" evidence="7">
    <conflict type="frameshift">
        <sequence resource="EMBL-CDS" id="BAE35717"/>
    </conflict>
</comment>